<protein>
    <recommendedName>
        <fullName>Putative leucine-rich repeat protein R380</fullName>
    </recommendedName>
</protein>
<dbReference type="EMBL" id="AY653733">
    <property type="protein sequence ID" value="AAV50649.1"/>
    <property type="molecule type" value="Genomic_DNA"/>
</dbReference>
<dbReference type="SMR" id="Q5UQX3"/>
<dbReference type="KEGG" id="vg:9925002"/>
<dbReference type="OrthoDB" id="13396at10239"/>
<dbReference type="Proteomes" id="UP000001134">
    <property type="component" value="Genome"/>
</dbReference>
<dbReference type="GO" id="GO:0035591">
    <property type="term" value="F:signaling adaptor activity"/>
    <property type="evidence" value="ECO:0007669"/>
    <property type="project" value="TreeGrafter"/>
</dbReference>
<dbReference type="Gene3D" id="3.80.10.10">
    <property type="entry name" value="Ribonuclease Inhibitor"/>
    <property type="match status" value="2"/>
</dbReference>
<dbReference type="InterPro" id="IPR052574">
    <property type="entry name" value="CDIRP"/>
</dbReference>
<dbReference type="InterPro" id="IPR001611">
    <property type="entry name" value="Leu-rich_rpt"/>
</dbReference>
<dbReference type="InterPro" id="IPR032675">
    <property type="entry name" value="LRR_dom_sf"/>
</dbReference>
<dbReference type="PANTHER" id="PTHR47566">
    <property type="match status" value="1"/>
</dbReference>
<dbReference type="PANTHER" id="PTHR47566:SF1">
    <property type="entry name" value="PROTEIN NUD1"/>
    <property type="match status" value="1"/>
</dbReference>
<dbReference type="Pfam" id="PF00560">
    <property type="entry name" value="LRR_1"/>
    <property type="match status" value="1"/>
</dbReference>
<dbReference type="SMART" id="SM00364">
    <property type="entry name" value="LRR_BAC"/>
    <property type="match status" value="5"/>
</dbReference>
<dbReference type="SUPFAM" id="SSF52058">
    <property type="entry name" value="L domain-like"/>
    <property type="match status" value="1"/>
</dbReference>
<dbReference type="PROSITE" id="PS51450">
    <property type="entry name" value="LRR"/>
    <property type="match status" value="6"/>
</dbReference>
<reference key="1">
    <citation type="journal article" date="2004" name="Science">
        <title>The 1.2-megabase genome sequence of Mimivirus.</title>
        <authorList>
            <person name="Raoult D."/>
            <person name="Audic S."/>
            <person name="Robert C."/>
            <person name="Abergel C."/>
            <person name="Renesto P."/>
            <person name="Ogata H."/>
            <person name="La Scola B."/>
            <person name="Susan M."/>
            <person name="Claverie J.-M."/>
        </authorList>
    </citation>
    <scope>NUCLEOTIDE SEQUENCE [LARGE SCALE GENOMIC DNA]</scope>
    <source>
        <strain>Rowbotham-Bradford</strain>
    </source>
</reference>
<accession>Q5UQX3</accession>
<gene>
    <name type="ordered locus">MIMI_R380</name>
</gene>
<organismHost>
    <name type="scientific">Acanthamoeba polyphaga</name>
    <name type="common">Amoeba</name>
    <dbReference type="NCBI Taxonomy" id="5757"/>
</organismHost>
<keyword id="KW-0433">Leucine-rich repeat</keyword>
<keyword id="KW-1185">Reference proteome</keyword>
<keyword id="KW-0677">Repeat</keyword>
<organism>
    <name type="scientific">Acanthamoeba polyphaga mimivirus</name>
    <name type="common">APMV</name>
    <dbReference type="NCBI Taxonomy" id="212035"/>
    <lineage>
        <taxon>Viruses</taxon>
        <taxon>Varidnaviria</taxon>
        <taxon>Bamfordvirae</taxon>
        <taxon>Nucleocytoviricota</taxon>
        <taxon>Megaviricetes</taxon>
        <taxon>Imitervirales</taxon>
        <taxon>Mimiviridae</taxon>
        <taxon>Megamimivirinae</taxon>
        <taxon>Mimivirus</taxon>
        <taxon>Mimivirus bradfordmassiliense</taxon>
    </lineage>
</organism>
<proteinExistence type="predicted"/>
<sequence length="421" mass="49655">MRAKSHRYPESSECYTDTTYYDPEDKYLDIGFQMLKSINIKRYPEFSYLEKLFINNNNLKQLPDPQYLPKIKELVCSYNILTHIPFYPNLIKLDISHNQVQNINVYNQSKLLYLDCSFNKNIETRIFLPECRELYVNDANISKLEINYFPNLRILDCSNNNISRISSLSSLIELNIQNNHITELPSYPQLVRIMADNNKLCYVPTFPNLLSLSVSYNNIVKITDQPLLKKLVANNNSVIELGNLPKLKFFDLSFNKLNSVTIPSSAKYIFLQFNNFVSVDIDNCIGCVKELQVDFNIYSRIYSKYFDNIYAINIQTNRDKLHYYLQQYSQLSNEHIVNQILNKFNGIKFKEHTKKLFGISVGLYELIFVSQTIKNTSDKESYDKYFQSVLQTDYFKKFYEFIQYVYYNSIIVTLYFNGYIS</sequence>
<feature type="chain" id="PRO_0000244017" description="Putative leucine-rich repeat protein R380">
    <location>
        <begin position="1"/>
        <end position="421"/>
    </location>
</feature>
<feature type="repeat" description="LRR 1">
    <location>
        <begin position="48"/>
        <end position="69"/>
    </location>
</feature>
<feature type="repeat" description="LRR 2">
    <location>
        <begin position="70"/>
        <end position="85"/>
    </location>
</feature>
<feature type="repeat" description="LRR 3">
    <location>
        <begin position="89"/>
        <end position="110"/>
    </location>
</feature>
<feature type="repeat" description="LRR 4">
    <location>
        <begin position="111"/>
        <end position="129"/>
    </location>
</feature>
<feature type="repeat" description="LRR 5">
    <location>
        <begin position="130"/>
        <end position="150"/>
    </location>
</feature>
<feature type="repeat" description="LRR 6">
    <location>
        <begin position="151"/>
        <end position="172"/>
    </location>
</feature>
<feature type="repeat" description="LRR 7">
    <location>
        <begin position="173"/>
        <end position="191"/>
    </location>
</feature>
<name>YR380_MIMIV</name>